<gene>
    <name evidence="1" type="primary">ndhN</name>
    <name type="ordered locus">SYNW2066</name>
</gene>
<feature type="chain" id="PRO_0000352242" description="NAD(P)H-quinone oxidoreductase subunit N">
    <location>
        <begin position="1"/>
        <end position="153"/>
    </location>
</feature>
<sequence length="153" mass="16758">MPLLLTGRTFRRDLEAHGCLAVHAPLEGGAETRLLRRLRGAGYRTRLWSARGLGDPEVFLTQKHGIRPPHLGHQSVGRGAAVGEVQEVVPQLGDLLDGDAQVALWLLEGQVLSQSELRSLCDLCSREPRLRIIVEMGGARSLRWQPMSGLLAS</sequence>
<accession>Q7U4K1</accession>
<name>NDHN_PARMW</name>
<evidence type="ECO:0000255" key="1">
    <source>
        <dbReference type="HAMAP-Rule" id="MF_01353"/>
    </source>
</evidence>
<organism>
    <name type="scientific">Parasynechococcus marenigrum (strain WH8102)</name>
    <dbReference type="NCBI Taxonomy" id="84588"/>
    <lineage>
        <taxon>Bacteria</taxon>
        <taxon>Bacillati</taxon>
        <taxon>Cyanobacteriota</taxon>
        <taxon>Cyanophyceae</taxon>
        <taxon>Synechococcales</taxon>
        <taxon>Prochlorococcaceae</taxon>
        <taxon>Parasynechococcus</taxon>
        <taxon>Parasynechococcus marenigrum</taxon>
    </lineage>
</organism>
<comment type="function">
    <text evidence="1">NDH-1 shuttles electrons from an unknown electron donor, via FMN and iron-sulfur (Fe-S) centers, to quinones in the respiratory and/or the photosynthetic chain. The immediate electron acceptor for the enzyme in this species is believed to be plastoquinone. Couples the redox reaction to proton translocation, and thus conserves the redox energy in a proton gradient. Cyanobacterial NDH-1 also plays a role in inorganic carbon-concentration.</text>
</comment>
<comment type="catalytic activity">
    <reaction evidence="1">
        <text>a plastoquinone + NADH + (n+1) H(+)(in) = a plastoquinol + NAD(+) + n H(+)(out)</text>
        <dbReference type="Rhea" id="RHEA:42608"/>
        <dbReference type="Rhea" id="RHEA-COMP:9561"/>
        <dbReference type="Rhea" id="RHEA-COMP:9562"/>
        <dbReference type="ChEBI" id="CHEBI:15378"/>
        <dbReference type="ChEBI" id="CHEBI:17757"/>
        <dbReference type="ChEBI" id="CHEBI:57540"/>
        <dbReference type="ChEBI" id="CHEBI:57945"/>
        <dbReference type="ChEBI" id="CHEBI:62192"/>
    </reaction>
</comment>
<comment type="catalytic activity">
    <reaction evidence="1">
        <text>a plastoquinone + NADPH + (n+1) H(+)(in) = a plastoquinol + NADP(+) + n H(+)(out)</text>
        <dbReference type="Rhea" id="RHEA:42612"/>
        <dbReference type="Rhea" id="RHEA-COMP:9561"/>
        <dbReference type="Rhea" id="RHEA-COMP:9562"/>
        <dbReference type="ChEBI" id="CHEBI:15378"/>
        <dbReference type="ChEBI" id="CHEBI:17757"/>
        <dbReference type="ChEBI" id="CHEBI:57783"/>
        <dbReference type="ChEBI" id="CHEBI:58349"/>
        <dbReference type="ChEBI" id="CHEBI:62192"/>
    </reaction>
</comment>
<comment type="subunit">
    <text evidence="1">NDH-1 can be composed of about 15 different subunits; different subcomplexes with different compositions have been identified which probably have different functions.</text>
</comment>
<comment type="subcellular location">
    <subcellularLocation>
        <location evidence="1">Cellular thylakoid membrane</location>
        <topology evidence="1">Peripheral membrane protein</topology>
        <orientation evidence="1">Cytoplasmic side</orientation>
    </subcellularLocation>
</comment>
<comment type="similarity">
    <text evidence="1">Belongs to the complex I NdhN subunit family.</text>
</comment>
<proteinExistence type="inferred from homology"/>
<reference key="1">
    <citation type="journal article" date="2003" name="Nature">
        <title>The genome of a motile marine Synechococcus.</title>
        <authorList>
            <person name="Palenik B."/>
            <person name="Brahamsha B."/>
            <person name="Larimer F.W."/>
            <person name="Land M.L."/>
            <person name="Hauser L."/>
            <person name="Chain P."/>
            <person name="Lamerdin J.E."/>
            <person name="Regala W."/>
            <person name="Allen E.E."/>
            <person name="McCarren J."/>
            <person name="Paulsen I.T."/>
            <person name="Dufresne A."/>
            <person name="Partensky F."/>
            <person name="Webb E.A."/>
            <person name="Waterbury J."/>
        </authorList>
    </citation>
    <scope>NUCLEOTIDE SEQUENCE [LARGE SCALE GENOMIC DNA]</scope>
    <source>
        <strain>WH8102</strain>
    </source>
</reference>
<keyword id="KW-0472">Membrane</keyword>
<keyword id="KW-0520">NAD</keyword>
<keyword id="KW-0521">NADP</keyword>
<keyword id="KW-0618">Plastoquinone</keyword>
<keyword id="KW-0874">Quinone</keyword>
<keyword id="KW-0793">Thylakoid</keyword>
<keyword id="KW-1278">Translocase</keyword>
<keyword id="KW-0813">Transport</keyword>
<dbReference type="EC" id="7.1.1.-" evidence="1"/>
<dbReference type="EMBL" id="BX569694">
    <property type="protein sequence ID" value="CAE08581.1"/>
    <property type="molecule type" value="Genomic_DNA"/>
</dbReference>
<dbReference type="RefSeq" id="WP_011128924.1">
    <property type="nucleotide sequence ID" value="NC_005070.1"/>
</dbReference>
<dbReference type="SMR" id="Q7U4K1"/>
<dbReference type="STRING" id="84588.SYNW2066"/>
<dbReference type="KEGG" id="syw:SYNW2066"/>
<dbReference type="eggNOG" id="ENOG502ZBMI">
    <property type="taxonomic scope" value="Bacteria"/>
</dbReference>
<dbReference type="HOGENOM" id="CLU_087432_0_0_3"/>
<dbReference type="BioCyc" id="MetaCyc:TX72_RS10380-MONOMER"/>
<dbReference type="Proteomes" id="UP000001422">
    <property type="component" value="Chromosome"/>
</dbReference>
<dbReference type="GO" id="GO:0031676">
    <property type="term" value="C:plasma membrane-derived thylakoid membrane"/>
    <property type="evidence" value="ECO:0007669"/>
    <property type="project" value="UniProtKB-SubCell"/>
</dbReference>
<dbReference type="GO" id="GO:0016655">
    <property type="term" value="F:oxidoreductase activity, acting on NAD(P)H, quinone or similar compound as acceptor"/>
    <property type="evidence" value="ECO:0007669"/>
    <property type="project" value="UniProtKB-UniRule"/>
</dbReference>
<dbReference type="GO" id="GO:0048038">
    <property type="term" value="F:quinone binding"/>
    <property type="evidence" value="ECO:0007669"/>
    <property type="project" value="UniProtKB-KW"/>
</dbReference>
<dbReference type="HAMAP" id="MF_01353">
    <property type="entry name" value="NDH1_NDH1N"/>
    <property type="match status" value="1"/>
</dbReference>
<dbReference type="InterPro" id="IPR020874">
    <property type="entry name" value="NAD(P)H-quinone_OxRdtase_su_N"/>
</dbReference>
<dbReference type="PANTHER" id="PTHR35515">
    <property type="entry name" value="NAD(P)H-QUINONE OXIDOREDUCTASE SUBUNIT N, CHLOROPLASTIC"/>
    <property type="match status" value="1"/>
</dbReference>
<dbReference type="PANTHER" id="PTHR35515:SF1">
    <property type="entry name" value="NAD(P)H-QUINONE OXIDOREDUCTASE SUBUNIT N, CHLOROPLASTIC"/>
    <property type="match status" value="1"/>
</dbReference>
<dbReference type="Pfam" id="PF11909">
    <property type="entry name" value="NdhN"/>
    <property type="match status" value="1"/>
</dbReference>
<protein>
    <recommendedName>
        <fullName evidence="1">NAD(P)H-quinone oxidoreductase subunit N</fullName>
        <ecNumber evidence="1">7.1.1.-</ecNumber>
    </recommendedName>
    <alternativeName>
        <fullName evidence="1">NAD(P)H dehydrogenase I subunit N</fullName>
        <shortName evidence="1">NDH-1 subunit N</shortName>
        <shortName evidence="1">NDH-N</shortName>
    </alternativeName>
</protein>